<protein>
    <recommendedName>
        <fullName>Cofilin-1</fullName>
    </recommendedName>
    <alternativeName>
        <fullName>Cofilin, non-muscle isoform</fullName>
    </alternativeName>
</protein>
<gene>
    <name type="primary">Cfl1</name>
</gene>
<proteinExistence type="evidence at protein level"/>
<feature type="initiator methionine" description="Removed" evidence="8 9">
    <location>
        <position position="1"/>
    </location>
</feature>
<feature type="chain" id="PRO_0000214902" description="Cofilin-1">
    <location>
        <begin position="2"/>
        <end position="166"/>
    </location>
</feature>
<feature type="domain" description="ADF-H" evidence="7">
    <location>
        <begin position="4"/>
        <end position="153"/>
    </location>
</feature>
<feature type="short sequence motif" description="Nuclear localization signal" evidence="6">
    <location>
        <begin position="30"/>
        <end position="34"/>
    </location>
</feature>
<feature type="modified residue" description="N-acetylalanine" evidence="8 9">
    <location>
        <position position="2"/>
    </location>
</feature>
<feature type="modified residue" description="Phosphoserine" evidence="8 9">
    <location>
        <position position="3"/>
    </location>
</feature>
<feature type="modified residue" description="Phosphoserine" evidence="3">
    <location>
        <position position="8"/>
    </location>
</feature>
<feature type="modified residue" description="N6-acetyllysine" evidence="4">
    <location>
        <position position="13"/>
    </location>
</feature>
<feature type="modified residue" description="Phosphothreonine" evidence="4">
    <location>
        <position position="25"/>
    </location>
</feature>
<feature type="modified residue" description="Phosphoserine" evidence="4">
    <location>
        <position position="41"/>
    </location>
</feature>
<feature type="modified residue" description="Phosphotyrosine" evidence="4">
    <location>
        <position position="68"/>
    </location>
</feature>
<feature type="modified residue" description="N6-acetyllysine" evidence="4">
    <location>
        <position position="73"/>
    </location>
</feature>
<feature type="modified residue" description="Phosphotyrosine" evidence="4">
    <location>
        <position position="140"/>
    </location>
</feature>
<feature type="modified residue" description="N6-acetyllysine" evidence="4">
    <location>
        <position position="144"/>
    </location>
</feature>
<feature type="modified residue" description="Phosphoserine" evidence="4">
    <location>
        <position position="156"/>
    </location>
</feature>
<feature type="cross-link" description="Glycyl lysine isopeptide (Lys-Gly) (interchain with G-Cter in SUMO2)" evidence="4">
    <location>
        <position position="132"/>
    </location>
</feature>
<dbReference type="EMBL" id="X62908">
    <property type="protein sequence ID" value="CAA44694.1"/>
    <property type="molecule type" value="mRNA"/>
</dbReference>
<dbReference type="EMBL" id="BC059143">
    <property type="protein sequence ID" value="AAH59143.1"/>
    <property type="molecule type" value="mRNA"/>
</dbReference>
<dbReference type="EMBL" id="BC086533">
    <property type="protein sequence ID" value="AAH86533.1"/>
    <property type="molecule type" value="mRNA"/>
</dbReference>
<dbReference type="PIR" id="S49101">
    <property type="entry name" value="S49101"/>
</dbReference>
<dbReference type="RefSeq" id="NP_058843.1">
    <property type="nucleotide sequence ID" value="NM_017147.3"/>
</dbReference>
<dbReference type="BMRB" id="P45592"/>
<dbReference type="SMR" id="P45592"/>
<dbReference type="BioGRID" id="247942">
    <property type="interactions" value="12"/>
</dbReference>
<dbReference type="FunCoup" id="P45592">
    <property type="interactions" value="1957"/>
</dbReference>
<dbReference type="IntAct" id="P45592">
    <property type="interactions" value="6"/>
</dbReference>
<dbReference type="MINT" id="P45592"/>
<dbReference type="STRING" id="10116.ENSRNOP00000059624"/>
<dbReference type="GlyGen" id="P45592">
    <property type="glycosylation" value="1 site, 1 O-linked glycan (1 site)"/>
</dbReference>
<dbReference type="iPTMnet" id="P45592"/>
<dbReference type="PhosphoSitePlus" id="P45592"/>
<dbReference type="jPOST" id="P45592"/>
<dbReference type="PaxDb" id="10116-ENSRNOP00000059624"/>
<dbReference type="Ensembl" id="ENSRNOT00000117088.1">
    <property type="protein sequence ID" value="ENSRNOP00000093902.1"/>
    <property type="gene ID" value="ENSRNOG00000020660.8"/>
</dbReference>
<dbReference type="GeneID" id="29271"/>
<dbReference type="KEGG" id="rno:29271"/>
<dbReference type="UCSC" id="RGD:69285">
    <property type="organism name" value="rat"/>
</dbReference>
<dbReference type="AGR" id="RGD:69285"/>
<dbReference type="CTD" id="1072"/>
<dbReference type="RGD" id="69285">
    <property type="gene designation" value="Cfl1"/>
</dbReference>
<dbReference type="eggNOG" id="KOG1735">
    <property type="taxonomic scope" value="Eukaryota"/>
</dbReference>
<dbReference type="GeneTree" id="ENSGT00950000183000"/>
<dbReference type="HOGENOM" id="CLU_094004_0_0_1"/>
<dbReference type="InParanoid" id="P45592"/>
<dbReference type="OMA" id="WSMIYAT"/>
<dbReference type="OrthoDB" id="31578at9989"/>
<dbReference type="PhylomeDB" id="P45592"/>
<dbReference type="PRO" id="PR:P45592"/>
<dbReference type="Proteomes" id="UP000002494">
    <property type="component" value="Chromosome 1"/>
</dbReference>
<dbReference type="Bgee" id="ENSRNOG00000020660">
    <property type="expression patterns" value="Expressed in cerebellum and 19 other cell types or tissues"/>
</dbReference>
<dbReference type="GO" id="GO:0015629">
    <property type="term" value="C:actin cytoskeleton"/>
    <property type="evidence" value="ECO:0000318"/>
    <property type="project" value="GO_Central"/>
</dbReference>
<dbReference type="GO" id="GO:0031252">
    <property type="term" value="C:cell leading edge"/>
    <property type="evidence" value="ECO:0000314"/>
    <property type="project" value="RGD"/>
</dbReference>
<dbReference type="GO" id="GO:0005911">
    <property type="term" value="C:cell-cell junction"/>
    <property type="evidence" value="ECO:0000266"/>
    <property type="project" value="RGD"/>
</dbReference>
<dbReference type="GO" id="GO:0090732">
    <property type="term" value="C:cofilin-actin rod"/>
    <property type="evidence" value="ECO:0000314"/>
    <property type="project" value="RGD"/>
</dbReference>
<dbReference type="GO" id="GO:0030864">
    <property type="term" value="C:cortical actin cytoskeleton"/>
    <property type="evidence" value="ECO:0000266"/>
    <property type="project" value="RGD"/>
</dbReference>
<dbReference type="GO" id="GO:0005737">
    <property type="term" value="C:cytoplasm"/>
    <property type="evidence" value="ECO:0000266"/>
    <property type="project" value="RGD"/>
</dbReference>
<dbReference type="GO" id="GO:0043197">
    <property type="term" value="C:dendritic spine"/>
    <property type="evidence" value="ECO:0000314"/>
    <property type="project" value="RGD"/>
</dbReference>
<dbReference type="GO" id="GO:0030175">
    <property type="term" value="C:filopodium"/>
    <property type="evidence" value="ECO:0000314"/>
    <property type="project" value="RGD"/>
</dbReference>
<dbReference type="GO" id="GO:0005925">
    <property type="term" value="C:focal adhesion"/>
    <property type="evidence" value="ECO:0000266"/>
    <property type="project" value="RGD"/>
</dbReference>
<dbReference type="GO" id="GO:0098978">
    <property type="term" value="C:glutamatergic synapse"/>
    <property type="evidence" value="ECO:0000314"/>
    <property type="project" value="SynGO"/>
</dbReference>
<dbReference type="GO" id="GO:0030426">
    <property type="term" value="C:growth cone"/>
    <property type="evidence" value="ECO:0000314"/>
    <property type="project" value="RGD"/>
</dbReference>
<dbReference type="GO" id="GO:0030027">
    <property type="term" value="C:lamellipodium"/>
    <property type="evidence" value="ECO:0000314"/>
    <property type="project" value="RGD"/>
</dbReference>
<dbReference type="GO" id="GO:0031258">
    <property type="term" value="C:lamellipodium membrane"/>
    <property type="evidence" value="ECO:0007669"/>
    <property type="project" value="UniProtKB-SubCell"/>
</dbReference>
<dbReference type="GO" id="GO:0031966">
    <property type="term" value="C:mitochondrial membrane"/>
    <property type="evidence" value="ECO:0000314"/>
    <property type="project" value="RGD"/>
</dbReference>
<dbReference type="GO" id="GO:0043025">
    <property type="term" value="C:neuronal cell body"/>
    <property type="evidence" value="ECO:0000314"/>
    <property type="project" value="RGD"/>
</dbReference>
<dbReference type="GO" id="GO:0016363">
    <property type="term" value="C:nuclear matrix"/>
    <property type="evidence" value="ECO:0007669"/>
    <property type="project" value="UniProtKB-SubCell"/>
</dbReference>
<dbReference type="GO" id="GO:0099092">
    <property type="term" value="C:postsynaptic density, intracellular component"/>
    <property type="evidence" value="ECO:0000266"/>
    <property type="project" value="RGD"/>
</dbReference>
<dbReference type="GO" id="GO:0032587">
    <property type="term" value="C:ruffle membrane"/>
    <property type="evidence" value="ECO:0007669"/>
    <property type="project" value="UniProtKB-SubCell"/>
</dbReference>
<dbReference type="GO" id="GO:0097060">
    <property type="term" value="C:synaptic membrane"/>
    <property type="evidence" value="ECO:0000314"/>
    <property type="project" value="RGD"/>
</dbReference>
<dbReference type="GO" id="GO:0003779">
    <property type="term" value="F:actin binding"/>
    <property type="evidence" value="ECO:0000315"/>
    <property type="project" value="RGD"/>
</dbReference>
<dbReference type="GO" id="GO:0051015">
    <property type="term" value="F:actin filament binding"/>
    <property type="evidence" value="ECO:0000314"/>
    <property type="project" value="RGD"/>
</dbReference>
<dbReference type="GO" id="GO:1902936">
    <property type="term" value="F:phosphatidylinositol bisphosphate binding"/>
    <property type="evidence" value="ECO:0000353"/>
    <property type="project" value="RGD"/>
</dbReference>
<dbReference type="GO" id="GO:0019903">
    <property type="term" value="F:protein phosphatase binding"/>
    <property type="evidence" value="ECO:0000353"/>
    <property type="project" value="RGD"/>
</dbReference>
<dbReference type="GO" id="GO:0005102">
    <property type="term" value="F:signaling receptor binding"/>
    <property type="evidence" value="ECO:0000266"/>
    <property type="project" value="RGD"/>
</dbReference>
<dbReference type="GO" id="GO:0030042">
    <property type="term" value="P:actin filament depolymerization"/>
    <property type="evidence" value="ECO:0000266"/>
    <property type="project" value="RGD"/>
</dbReference>
<dbReference type="GO" id="GO:0030043">
    <property type="term" value="P:actin filament fragmentation"/>
    <property type="evidence" value="ECO:0000266"/>
    <property type="project" value="RGD"/>
</dbReference>
<dbReference type="GO" id="GO:0007015">
    <property type="term" value="P:actin filament organization"/>
    <property type="evidence" value="ECO:0000250"/>
    <property type="project" value="UniProtKB"/>
</dbReference>
<dbReference type="GO" id="GO:0051014">
    <property type="term" value="P:actin filament severing"/>
    <property type="evidence" value="ECO:0000318"/>
    <property type="project" value="GO_Central"/>
</dbReference>
<dbReference type="GO" id="GO:0048870">
    <property type="term" value="P:cell motility"/>
    <property type="evidence" value="ECO:0000266"/>
    <property type="project" value="RGD"/>
</dbReference>
<dbReference type="GO" id="GO:0030030">
    <property type="term" value="P:cell projection organization"/>
    <property type="evidence" value="ECO:0000314"/>
    <property type="project" value="MGI"/>
</dbReference>
<dbReference type="GO" id="GO:0071364">
    <property type="term" value="P:cellular response to epidermal growth factor stimulus"/>
    <property type="evidence" value="ECO:0000315"/>
    <property type="project" value="RGD"/>
</dbReference>
<dbReference type="GO" id="GO:0071362">
    <property type="term" value="P:cellular response to ether"/>
    <property type="evidence" value="ECO:0000270"/>
    <property type="project" value="RGD"/>
</dbReference>
<dbReference type="GO" id="GO:0070301">
    <property type="term" value="P:cellular response to hydrogen peroxide"/>
    <property type="evidence" value="ECO:0000314"/>
    <property type="project" value="RGD"/>
</dbReference>
<dbReference type="GO" id="GO:1990314">
    <property type="term" value="P:cellular response to insulin-like growth factor stimulus"/>
    <property type="evidence" value="ECO:0000314"/>
    <property type="project" value="RGD"/>
</dbReference>
<dbReference type="GO" id="GO:0071347">
    <property type="term" value="P:cellular response to interleukin-1"/>
    <property type="evidence" value="ECO:0000314"/>
    <property type="project" value="RGD"/>
</dbReference>
<dbReference type="GO" id="GO:0071354">
    <property type="term" value="P:cellular response to interleukin-6"/>
    <property type="evidence" value="ECO:0000314"/>
    <property type="project" value="RGD"/>
</dbReference>
<dbReference type="GO" id="GO:0071356">
    <property type="term" value="P:cellular response to tumor necrosis factor"/>
    <property type="evidence" value="ECO:0000314"/>
    <property type="project" value="RGD"/>
</dbReference>
<dbReference type="GO" id="GO:0007010">
    <property type="term" value="P:cytoskeleton organization"/>
    <property type="evidence" value="ECO:0000250"/>
    <property type="project" value="UniProtKB"/>
</dbReference>
<dbReference type="GO" id="GO:0030010">
    <property type="term" value="P:establishment of cell polarity"/>
    <property type="evidence" value="ECO:0000266"/>
    <property type="project" value="RGD"/>
</dbReference>
<dbReference type="GO" id="GO:0051293">
    <property type="term" value="P:establishment of spindle localization"/>
    <property type="evidence" value="ECO:0000250"/>
    <property type="project" value="UniProtKB"/>
</dbReference>
<dbReference type="GO" id="GO:0021766">
    <property type="term" value="P:hippocampus development"/>
    <property type="evidence" value="ECO:0000270"/>
    <property type="project" value="RGD"/>
</dbReference>
<dbReference type="GO" id="GO:0000281">
    <property type="term" value="P:mitotic cytokinesis"/>
    <property type="evidence" value="ECO:0000266"/>
    <property type="project" value="RGD"/>
</dbReference>
<dbReference type="GO" id="GO:0098885">
    <property type="term" value="P:modification of postsynaptic actin cytoskeleton"/>
    <property type="evidence" value="ECO:0000314"/>
    <property type="project" value="SynGO"/>
</dbReference>
<dbReference type="GO" id="GO:0050804">
    <property type="term" value="P:modulation of chemical synaptic transmission"/>
    <property type="evidence" value="ECO:0000314"/>
    <property type="project" value="SynGO"/>
</dbReference>
<dbReference type="GO" id="GO:0032232">
    <property type="term" value="P:negative regulation of actin filament bundle assembly"/>
    <property type="evidence" value="ECO:0000315"/>
    <property type="project" value="RGD"/>
</dbReference>
<dbReference type="GO" id="GO:0030835">
    <property type="term" value="P:negative regulation of actin filament depolymerization"/>
    <property type="evidence" value="ECO:0000315"/>
    <property type="project" value="RGD"/>
</dbReference>
<dbReference type="GO" id="GO:0007162">
    <property type="term" value="P:negative regulation of cell adhesion"/>
    <property type="evidence" value="ECO:0000315"/>
    <property type="project" value="RGD"/>
</dbReference>
<dbReference type="GO" id="GO:2000146">
    <property type="term" value="P:negative regulation of cell motility"/>
    <property type="evidence" value="ECO:0000315"/>
    <property type="project" value="RGD"/>
</dbReference>
<dbReference type="GO" id="GO:0045792">
    <property type="term" value="P:negative regulation of cell size"/>
    <property type="evidence" value="ECO:0000314"/>
    <property type="project" value="MGI"/>
</dbReference>
<dbReference type="GO" id="GO:1902951">
    <property type="term" value="P:negative regulation of dendritic spine maintenance"/>
    <property type="evidence" value="ECO:0000315"/>
    <property type="project" value="RGD"/>
</dbReference>
<dbReference type="GO" id="GO:0010593">
    <property type="term" value="P:negative regulation of lamellipodium assembly"/>
    <property type="evidence" value="ECO:0000315"/>
    <property type="project" value="RGD"/>
</dbReference>
<dbReference type="GO" id="GO:1905875">
    <property type="term" value="P:negative regulation of postsynaptic density organization"/>
    <property type="evidence" value="ECO:0000315"/>
    <property type="project" value="RGD"/>
</dbReference>
<dbReference type="GO" id="GO:0051511">
    <property type="term" value="P:negative regulation of unidimensional cell growth"/>
    <property type="evidence" value="ECO:0000315"/>
    <property type="project" value="RGD"/>
</dbReference>
<dbReference type="GO" id="GO:0001755">
    <property type="term" value="P:neural crest cell migration"/>
    <property type="evidence" value="ECO:0000266"/>
    <property type="project" value="RGD"/>
</dbReference>
<dbReference type="GO" id="GO:0001842">
    <property type="term" value="P:neural fold formation"/>
    <property type="evidence" value="ECO:0000266"/>
    <property type="project" value="RGD"/>
</dbReference>
<dbReference type="GO" id="GO:0044794">
    <property type="term" value="P:positive regulation by host of viral process"/>
    <property type="evidence" value="ECO:0000266"/>
    <property type="project" value="RGD"/>
</dbReference>
<dbReference type="GO" id="GO:0030836">
    <property type="term" value="P:positive regulation of actin filament depolymerization"/>
    <property type="evidence" value="ECO:0000266"/>
    <property type="project" value="RGD"/>
</dbReference>
<dbReference type="GO" id="GO:2000814">
    <property type="term" value="P:positive regulation of barbed-end actin filament capping"/>
    <property type="evidence" value="ECO:0000315"/>
    <property type="project" value="RGD"/>
</dbReference>
<dbReference type="GO" id="GO:0030307">
    <property type="term" value="P:positive regulation of cell growth"/>
    <property type="evidence" value="ECO:0000315"/>
    <property type="project" value="RGD"/>
</dbReference>
<dbReference type="GO" id="GO:2000147">
    <property type="term" value="P:positive regulation of cell motility"/>
    <property type="evidence" value="ECO:0000315"/>
    <property type="project" value="RGD"/>
</dbReference>
<dbReference type="GO" id="GO:0060999">
    <property type="term" value="P:positive regulation of dendritic spine development"/>
    <property type="evidence" value="ECO:0000315"/>
    <property type="project" value="RGD"/>
</dbReference>
<dbReference type="GO" id="GO:0040019">
    <property type="term" value="P:positive regulation of embryonic development"/>
    <property type="evidence" value="ECO:0000250"/>
    <property type="project" value="UniProtKB"/>
</dbReference>
<dbReference type="GO" id="GO:2000784">
    <property type="term" value="P:positive regulation of establishment of cell polarity regulating cell shape"/>
    <property type="evidence" value="ECO:0000315"/>
    <property type="project" value="RGD"/>
</dbReference>
<dbReference type="GO" id="GO:0051894">
    <property type="term" value="P:positive regulation of focal adhesion assembly"/>
    <property type="evidence" value="ECO:0000315"/>
    <property type="project" value="RGD"/>
</dbReference>
<dbReference type="GO" id="GO:0010592">
    <property type="term" value="P:positive regulation of lamellipodium assembly"/>
    <property type="evidence" value="ECO:0000315"/>
    <property type="project" value="RGD"/>
</dbReference>
<dbReference type="GO" id="GO:1905873">
    <property type="term" value="P:positive regulation of protein localization to cell leading edge"/>
    <property type="evidence" value="ECO:0000315"/>
    <property type="project" value="RGD"/>
</dbReference>
<dbReference type="GO" id="GO:0045862">
    <property type="term" value="P:positive regulation of proteolysis"/>
    <property type="evidence" value="ECO:0000315"/>
    <property type="project" value="RGD"/>
</dbReference>
<dbReference type="GO" id="GO:0031915">
    <property type="term" value="P:positive regulation of synaptic plasticity"/>
    <property type="evidence" value="ECO:0000315"/>
    <property type="project" value="RGD"/>
</dbReference>
<dbReference type="GO" id="GO:0006606">
    <property type="term" value="P:protein import into nucleus"/>
    <property type="evidence" value="ECO:0000315"/>
    <property type="project" value="RGD"/>
</dbReference>
<dbReference type="GO" id="GO:0022604">
    <property type="term" value="P:regulation of cell morphogenesis"/>
    <property type="evidence" value="ECO:0000250"/>
    <property type="project" value="UniProtKB"/>
</dbReference>
<dbReference type="GO" id="GO:0061001">
    <property type="term" value="P:regulation of dendritic spine morphogenesis"/>
    <property type="evidence" value="ECO:0000250"/>
    <property type="project" value="ParkinsonsUK-UCL"/>
</dbReference>
<dbReference type="GO" id="GO:0014823">
    <property type="term" value="P:response to activity"/>
    <property type="evidence" value="ECO:0000270"/>
    <property type="project" value="RGD"/>
</dbReference>
<dbReference type="GO" id="GO:0043200">
    <property type="term" value="P:response to amino acid"/>
    <property type="evidence" value="ECO:0000266"/>
    <property type="project" value="RGD"/>
</dbReference>
<dbReference type="GO" id="GO:0009615">
    <property type="term" value="P:response to virus"/>
    <property type="evidence" value="ECO:0000266"/>
    <property type="project" value="RGD"/>
</dbReference>
<dbReference type="CDD" id="cd11286">
    <property type="entry name" value="ADF_cofilin_like"/>
    <property type="match status" value="1"/>
</dbReference>
<dbReference type="FunFam" id="3.40.20.10:FF:000010">
    <property type="entry name" value="Putative destrin"/>
    <property type="match status" value="1"/>
</dbReference>
<dbReference type="Gene3D" id="3.40.20.10">
    <property type="entry name" value="Severin"/>
    <property type="match status" value="1"/>
</dbReference>
<dbReference type="InterPro" id="IPR002108">
    <property type="entry name" value="ADF-H"/>
</dbReference>
<dbReference type="InterPro" id="IPR029006">
    <property type="entry name" value="ADF-H/Gelsolin-like_dom_sf"/>
</dbReference>
<dbReference type="InterPro" id="IPR017904">
    <property type="entry name" value="ADF/Cofilin"/>
</dbReference>
<dbReference type="PANTHER" id="PTHR11913">
    <property type="entry name" value="COFILIN-RELATED"/>
    <property type="match status" value="1"/>
</dbReference>
<dbReference type="Pfam" id="PF00241">
    <property type="entry name" value="Cofilin_ADF"/>
    <property type="match status" value="1"/>
</dbReference>
<dbReference type="PRINTS" id="PR00006">
    <property type="entry name" value="COFILIN"/>
</dbReference>
<dbReference type="SMART" id="SM00102">
    <property type="entry name" value="ADF"/>
    <property type="match status" value="1"/>
</dbReference>
<dbReference type="SUPFAM" id="SSF55753">
    <property type="entry name" value="Actin depolymerizing proteins"/>
    <property type="match status" value="1"/>
</dbReference>
<dbReference type="PROSITE" id="PS51263">
    <property type="entry name" value="ADF_H"/>
    <property type="match status" value="1"/>
</dbReference>
<reference key="1">
    <citation type="submission" date="1991-10" db="EMBL/GenBank/DDBJ databases">
        <authorList>
            <person name="Shirasawa T."/>
            <person name="Takahashi H."/>
            <person name="Sakamoto K."/>
            <person name="Kawashima A."/>
            <person name="Akashi T."/>
        </authorList>
    </citation>
    <scope>NUCLEOTIDE SEQUENCE [MRNA]</scope>
    <source>
        <strain>Wistar</strain>
        <tissue>Brain</tissue>
    </source>
</reference>
<reference key="2">
    <citation type="journal article" date="1998" name="Arch. Oral Biol.">
        <title>Complete amino acid sequences and phosphorylation sites, determined by Edman degradation and mass spectrometry, of rat parotid destrin- and cofilin-like proteins.</title>
        <authorList>
            <person name="Kanamori T."/>
            <person name="Suzuki M."/>
            <person name="Titani K."/>
        </authorList>
    </citation>
    <scope>PROTEIN SEQUENCE OF 2-166</scope>
    <scope>ACETYLATION AT ALA-2</scope>
    <scope>PHOSPHORYLATION AT SER-3</scope>
    <scope>IDENTIFICATION BY MASS SPECTROMETRY</scope>
    <source>
        <tissue>Parotid gland</tissue>
    </source>
</reference>
<reference key="3">
    <citation type="journal article" date="2004" name="Genome Res.">
        <title>The status, quality, and expansion of the NIH full-length cDNA project: the Mammalian Gene Collection (MGC).</title>
        <authorList>
            <consortium name="The MGC Project Team"/>
        </authorList>
    </citation>
    <scope>NUCLEOTIDE SEQUENCE [LARGE SCALE MRNA]</scope>
    <source>
        <tissue>Ovary</tissue>
        <tissue>Pituitary</tissue>
    </source>
</reference>
<reference key="4">
    <citation type="submission" date="2007-07" db="UniProtKB">
        <authorList>
            <person name="Lubec G."/>
            <person name="Afjehi-Sadat L."/>
            <person name="Chen W.-Q."/>
            <person name="Kang S.U."/>
        </authorList>
    </citation>
    <scope>PROTEIN SEQUENCE OF 35-73; 82-92; 96-112; 133-146 AND 153-166</scope>
    <scope>IDENTIFICATION BY MASS SPECTROMETRY</scope>
    <source>
        <strain>Sprague-Dawley</strain>
        <tissue>Brain</tissue>
        <tissue>Hippocampus</tissue>
        <tissue>Spinal cord</tissue>
    </source>
</reference>
<reference key="5">
    <citation type="submission" date="2007-02" db="UniProtKB">
        <authorList>
            <person name="Lubec G."/>
            <person name="Chen W.-Q."/>
        </authorList>
    </citation>
    <scope>ACETYLATION AT ALA-2</scope>
    <scope>PHOSPHORYLATION AT SER-3</scope>
    <scope>IDENTIFICATION BY MASS SPECTROMETRY</scope>
</reference>
<name>COF1_RAT</name>
<sequence>MASGVAVSDGVIKVFNDMKVRKSSTPEEVKKRKKAVLFCLSEDKKNIILEEGKEILVGDVGQTVDDPYTTFVKMLPDKDCRYALYDATYETKESKKEDLVFIFWAPESAPLKSKMIYASSKDAIKKKLTGIKHELQANCYEEVKDRCTLAEKLGGSAVISLEGKPL</sequence>
<evidence type="ECO:0000250" key="1"/>
<evidence type="ECO:0000250" key="2">
    <source>
        <dbReference type="UniProtKB" id="P10668"/>
    </source>
</evidence>
<evidence type="ECO:0000250" key="3">
    <source>
        <dbReference type="UniProtKB" id="P18760"/>
    </source>
</evidence>
<evidence type="ECO:0000250" key="4">
    <source>
        <dbReference type="UniProtKB" id="P23528"/>
    </source>
</evidence>
<evidence type="ECO:0000250" key="5">
    <source>
        <dbReference type="UniProtKB" id="P45695"/>
    </source>
</evidence>
<evidence type="ECO:0000255" key="6"/>
<evidence type="ECO:0000255" key="7">
    <source>
        <dbReference type="PROSITE-ProRule" id="PRU00599"/>
    </source>
</evidence>
<evidence type="ECO:0000269" key="8">
    <source>
    </source>
</evidence>
<evidence type="ECO:0000269" key="9">
    <source ref="5"/>
</evidence>
<evidence type="ECO:0000305" key="10"/>
<organism>
    <name type="scientific">Rattus norvegicus</name>
    <name type="common">Rat</name>
    <dbReference type="NCBI Taxonomy" id="10116"/>
    <lineage>
        <taxon>Eukaryota</taxon>
        <taxon>Metazoa</taxon>
        <taxon>Chordata</taxon>
        <taxon>Craniata</taxon>
        <taxon>Vertebrata</taxon>
        <taxon>Euteleostomi</taxon>
        <taxon>Mammalia</taxon>
        <taxon>Eutheria</taxon>
        <taxon>Euarchontoglires</taxon>
        <taxon>Glires</taxon>
        <taxon>Rodentia</taxon>
        <taxon>Myomorpha</taxon>
        <taxon>Muroidea</taxon>
        <taxon>Muridae</taxon>
        <taxon>Murinae</taxon>
        <taxon>Rattus</taxon>
    </lineage>
</organism>
<keyword id="KW-0007">Acetylation</keyword>
<keyword id="KW-0009">Actin-binding</keyword>
<keyword id="KW-1003">Cell membrane</keyword>
<keyword id="KW-0966">Cell projection</keyword>
<keyword id="KW-0963">Cytoplasm</keyword>
<keyword id="KW-0206">Cytoskeleton</keyword>
<keyword id="KW-0903">Direct protein sequencing</keyword>
<keyword id="KW-1017">Isopeptide bond</keyword>
<keyword id="KW-0472">Membrane</keyword>
<keyword id="KW-0539">Nucleus</keyword>
<keyword id="KW-0597">Phosphoprotein</keyword>
<keyword id="KW-1185">Reference proteome</keyword>
<keyword id="KW-0832">Ubl conjugation</keyword>
<accession>P45592</accession>
<comment type="function">
    <text evidence="3 4">Binds to F-actin and exhibits pH-sensitive F-actin depolymerizing activity (By similarity). Important for normal progress through mitosis and normal cytokinesis (By similarity). In conjunction with the subcortical maternal complex (SCMC), plays an essential role for zygotes to progress beyond the first embryonic cell divisions via regulation of actin dynamics (By similarity). Required for the centralization of the mitotic spindle and symmetric division of zygotes (By similarity). Plays a role in the regulation of cell morphology and cytoskeletal organization in epithelial cells (By similarity). Required for the up-regulation of atypical chemokine receptor ACKR2 from endosomal compartment to cell membrane, increasing its efficiency in chemokine uptake and degradation (By similarity). Required for neural tube morphogenesis and neural crest cell migration (By similarity).</text>
</comment>
<comment type="subunit">
    <text evidence="2 3">Can bind G- and F-actin in a 1:1 ratio of cofilin to actin (By similarity). It is a major component of intranuclear and cytoplasmic actin rods (By similarity). Interacts with the subcortical maternal complex (SCMC) via interaction with TLE6 and NLRP5 (By similarity). Interacts with C9orf72 (By similarity).</text>
</comment>
<comment type="interaction">
    <interactant intactId="EBI-917556">
        <id>P45592</id>
    </interactant>
    <interactant intactId="EBI-6273816">
        <id>Q66HL2</id>
        <label>Cttn</label>
    </interactant>
    <organismsDiffer>false</organismsDiffer>
    <experiments>4</experiments>
</comment>
<comment type="subcellular location">
    <subcellularLocation>
        <location evidence="2">Nucleus matrix</location>
    </subcellularLocation>
    <subcellularLocation>
        <location evidence="2">Cytoplasm</location>
        <location evidence="2">Cytoskeleton</location>
    </subcellularLocation>
    <subcellularLocation>
        <location evidence="1">Cell projection</location>
        <location evidence="1">Ruffle membrane</location>
        <topology evidence="2">Peripheral membrane protein</topology>
        <orientation evidence="2">Cytoplasmic side</orientation>
    </subcellularLocation>
    <subcellularLocation>
        <location evidence="2">Cell projection</location>
        <location evidence="2">Lamellipodium membrane</location>
        <topology evidence="2">Peripheral membrane protein</topology>
        <orientation evidence="2">Cytoplasmic side</orientation>
    </subcellularLocation>
    <subcellularLocation>
        <location evidence="3">Cell projection</location>
        <location evidence="3">Lamellipodium</location>
    </subcellularLocation>
    <subcellularLocation>
        <location evidence="3">Cell projection</location>
        <location evidence="3">Growth cone</location>
    </subcellularLocation>
    <subcellularLocation>
        <location evidence="3">Cell projection</location>
        <location evidence="3">Axon</location>
    </subcellularLocation>
    <text evidence="2 4">Colocalizes with the actin cytoskeleton in membrane ruffles and lamellipodia. Detected at the cleavage furrow and contractile ring during cytokinesis. Almost completely in nucleus in cells exposed to heat shock or 10% dimethyl sulfoxide.</text>
</comment>
<comment type="PTM">
    <text evidence="5">Inactivated by phosphorylation on Ser-3. Phosphorylated on Ser-3 in resting cells. Dephosphorylated by PDXP/chronophin; this restores its activity in promoting actin filament depolymerization. The phosphorylation of Ser-24 may prevent recognition of the nuclear localization signal (By similarity). Phosphorylated via a ARRB1-RAC1-LIMK1-PAK1 cascade upon active ligand stimulation of atypical chemokine receptor ACKR2 (By similarity).</text>
</comment>
<comment type="similarity">
    <text evidence="10">Belongs to the actin-binding proteins ADF family.</text>
</comment>